<evidence type="ECO:0000255" key="1">
    <source>
        <dbReference type="HAMAP-Rule" id="MF_04071"/>
    </source>
</evidence>
<organismHost>
    <name type="scientific">Aves</name>
    <dbReference type="NCBI Taxonomy" id="8782"/>
</organismHost>
<organismHost>
    <name type="scientific">Felis catus</name>
    <name type="common">Cat</name>
    <name type="synonym">Felis silvestris catus</name>
    <dbReference type="NCBI Taxonomy" id="9685"/>
</organismHost>
<organismHost>
    <name type="scientific">Homo sapiens</name>
    <name type="common">Human</name>
    <dbReference type="NCBI Taxonomy" id="9606"/>
</organismHost>
<organismHost>
    <name type="scientific">Panthera pardus</name>
    <name type="common">Leopard</name>
    <name type="synonym">Felis pardus</name>
    <dbReference type="NCBI Taxonomy" id="9691"/>
</organismHost>
<organismHost>
    <name type="scientific">Panthera tigris</name>
    <name type="common">Tiger</name>
    <dbReference type="NCBI Taxonomy" id="9694"/>
</organismHost>
<organismHost>
    <name type="scientific">Sus scrofa</name>
    <name type="common">Pig</name>
    <dbReference type="NCBI Taxonomy" id="9823"/>
</organismHost>
<dbReference type="EC" id="3.2.1.18" evidence="1"/>
<dbReference type="EMBL" id="AY651460">
    <property type="protein sequence ID" value="AAT73342.2"/>
    <property type="molecule type" value="Genomic_RNA"/>
</dbReference>
<dbReference type="SMR" id="Q6DPJ9"/>
<dbReference type="CAZy" id="GH34">
    <property type="family name" value="Glycoside Hydrolase Family 34"/>
</dbReference>
<dbReference type="GlyCosmos" id="Q6DPJ9">
    <property type="glycosylation" value="3 sites, No reported glycans"/>
</dbReference>
<dbReference type="GO" id="GO:0020002">
    <property type="term" value="C:host cell plasma membrane"/>
    <property type="evidence" value="ECO:0007669"/>
    <property type="project" value="UniProtKB-SubCell"/>
</dbReference>
<dbReference type="GO" id="GO:0016020">
    <property type="term" value="C:membrane"/>
    <property type="evidence" value="ECO:0007669"/>
    <property type="project" value="UniProtKB-UniRule"/>
</dbReference>
<dbReference type="GO" id="GO:0055036">
    <property type="term" value="C:virion membrane"/>
    <property type="evidence" value="ECO:0007669"/>
    <property type="project" value="UniProtKB-SubCell"/>
</dbReference>
<dbReference type="GO" id="GO:0004308">
    <property type="term" value="F:exo-alpha-sialidase activity"/>
    <property type="evidence" value="ECO:0007669"/>
    <property type="project" value="UniProtKB-UniRule"/>
</dbReference>
<dbReference type="GO" id="GO:0046872">
    <property type="term" value="F:metal ion binding"/>
    <property type="evidence" value="ECO:0007669"/>
    <property type="project" value="UniProtKB-UniRule"/>
</dbReference>
<dbReference type="GO" id="GO:0005975">
    <property type="term" value="P:carbohydrate metabolic process"/>
    <property type="evidence" value="ECO:0007669"/>
    <property type="project" value="InterPro"/>
</dbReference>
<dbReference type="GO" id="GO:0046761">
    <property type="term" value="P:viral budding from plasma membrane"/>
    <property type="evidence" value="ECO:0007669"/>
    <property type="project" value="UniProtKB-UniRule"/>
</dbReference>
<dbReference type="CDD" id="cd15483">
    <property type="entry name" value="Influenza_NA"/>
    <property type="match status" value="1"/>
</dbReference>
<dbReference type="FunFam" id="2.120.10.10:FF:000001">
    <property type="entry name" value="Neuraminidase"/>
    <property type="match status" value="1"/>
</dbReference>
<dbReference type="Gene3D" id="2.120.10.10">
    <property type="match status" value="1"/>
</dbReference>
<dbReference type="HAMAP" id="MF_04071">
    <property type="entry name" value="INFV_NRAM"/>
    <property type="match status" value="1"/>
</dbReference>
<dbReference type="InterPro" id="IPR001860">
    <property type="entry name" value="Glyco_hydro_34"/>
</dbReference>
<dbReference type="InterPro" id="IPR033654">
    <property type="entry name" value="Sialidase_Influenza_A/B"/>
</dbReference>
<dbReference type="InterPro" id="IPR036278">
    <property type="entry name" value="Sialidase_sf"/>
</dbReference>
<dbReference type="Pfam" id="PF00064">
    <property type="entry name" value="Neur"/>
    <property type="match status" value="1"/>
</dbReference>
<dbReference type="SUPFAM" id="SSF50939">
    <property type="entry name" value="Sialidases"/>
    <property type="match status" value="1"/>
</dbReference>
<accession>Q6DPJ9</accession>
<reference key="1">
    <citation type="journal article" date="2004" name="Nature">
        <title>Genesis of a highly pathogenic and potentially pandemic H5N1 influenza virus in eastern Asia.</title>
        <authorList>
            <person name="Li K.S."/>
            <person name="Guan Y."/>
            <person name="Wang J."/>
            <person name="Smith G.J.D."/>
            <person name="Xu K.M."/>
            <person name="Duan L."/>
            <person name="Rahardjo A.P."/>
            <person name="Puthavathana P."/>
            <person name="Buranathai C."/>
            <person name="Nguyen T.D."/>
            <person name="Estoepangestie A.T.S."/>
            <person name="Chaisingh A."/>
            <person name="Auewarakul P."/>
            <person name="Long H.T."/>
            <person name="Hanh N.T.H."/>
            <person name="Webby R.J."/>
            <person name="Poon L.L.M."/>
            <person name="Chen H."/>
            <person name="Shortridge K.F."/>
            <person name="Yuen K.Y."/>
            <person name="Webster R.G."/>
            <person name="Peiris J.S.M."/>
        </authorList>
    </citation>
    <scope>NUCLEOTIDE SEQUENCE [GENOMIC RNA]</scope>
</reference>
<reference key="2">
    <citation type="submission" date="2008-03" db="EMBL/GenBank/DDBJ databases">
        <authorList>
            <person name="Li K.S."/>
            <person name="Guan Y."/>
            <person name="Wang J."/>
            <person name="Smith G.J.D."/>
            <person name="Xu K.M."/>
            <person name="Duan L."/>
            <person name="Rahardjo A.P."/>
            <person name="Puthavathana P."/>
            <person name="Buranathai C."/>
            <person name="Nguyen T.D."/>
            <person name="Estoepangestie A.T.S."/>
            <person name="Chaisingh A."/>
            <person name="Auewarakul P."/>
            <person name="Long H.T."/>
            <person name="Hanh N.T.H."/>
            <person name="Lim W."/>
            <person name="Webby R.J."/>
            <person name="Poon L.L.M."/>
            <person name="Chen H."/>
            <person name="Shortridge K.F."/>
            <person name="Yuen K.Y."/>
            <person name="Webster R.G."/>
            <person name="Peiris J.S.M."/>
        </authorList>
    </citation>
    <scope>SEQUENCE REVISION</scope>
</reference>
<protein>
    <recommendedName>
        <fullName evidence="1">Neuraminidase</fullName>
        <ecNumber evidence="1">3.2.1.18</ecNumber>
    </recommendedName>
</protein>
<feature type="chain" id="PRO_0000310937" description="Neuraminidase">
    <location>
        <begin position="1"/>
        <end position="449"/>
    </location>
</feature>
<feature type="topological domain" description="Intravirion" evidence="1">
    <location>
        <begin position="1"/>
        <end position="6"/>
    </location>
</feature>
<feature type="transmembrane region" description="Helical" evidence="1">
    <location>
        <begin position="7"/>
        <end position="27"/>
    </location>
</feature>
<feature type="topological domain" description="Virion surface" evidence="1">
    <location>
        <begin position="28"/>
        <end position="449"/>
    </location>
</feature>
<feature type="region of interest" description="Involved in apical transport and lipid raft association" evidence="1">
    <location>
        <begin position="11"/>
        <end position="33"/>
    </location>
</feature>
<feature type="region of interest" description="Hypervariable stalk region" evidence="1">
    <location>
        <begin position="36"/>
        <end position="70"/>
    </location>
</feature>
<feature type="region of interest" description="Head of neuraminidase" evidence="1">
    <location>
        <begin position="71"/>
        <end position="449"/>
    </location>
</feature>
<feature type="active site" description="Proton donor/acceptor" evidence="1">
    <location>
        <position position="131"/>
    </location>
</feature>
<feature type="active site" description="Nucleophile" evidence="1">
    <location>
        <position position="382"/>
    </location>
</feature>
<feature type="binding site" evidence="1">
    <location>
        <position position="98"/>
    </location>
    <ligand>
        <name>substrate</name>
    </ligand>
</feature>
<feature type="binding site" evidence="1">
    <location>
        <position position="132"/>
    </location>
    <ligand>
        <name>substrate</name>
    </ligand>
</feature>
<feature type="binding site" evidence="1">
    <location>
        <begin position="257"/>
        <end position="258"/>
    </location>
    <ligand>
        <name>substrate</name>
    </ligand>
</feature>
<feature type="binding site" evidence="1">
    <location>
        <position position="273"/>
    </location>
    <ligand>
        <name>substrate</name>
    </ligand>
</feature>
<feature type="binding site" evidence="1">
    <location>
        <position position="274"/>
    </location>
    <ligand>
        <name>Ca(2+)</name>
        <dbReference type="ChEBI" id="CHEBI:29108"/>
    </ligand>
</feature>
<feature type="binding site" evidence="1">
    <location>
        <position position="278"/>
    </location>
    <ligand>
        <name>Ca(2+)</name>
        <dbReference type="ChEBI" id="CHEBI:29108"/>
    </ligand>
</feature>
<feature type="binding site" evidence="1">
    <location>
        <position position="304"/>
    </location>
    <ligand>
        <name>Ca(2+)</name>
        <dbReference type="ChEBI" id="CHEBI:29108"/>
    </ligand>
</feature>
<feature type="binding site" evidence="1">
    <location>
        <position position="348"/>
    </location>
    <ligand>
        <name>substrate</name>
    </ligand>
</feature>
<feature type="glycosylation site" description="N-linked (GlcNAc...) asparagine; by host" evidence="1">
    <location>
        <position position="68"/>
    </location>
</feature>
<feature type="glycosylation site" description="N-linked (GlcNAc...) asparagine; by host" evidence="1">
    <location>
        <position position="126"/>
    </location>
</feature>
<feature type="glycosylation site" description="N-linked (GlcNAc...) asparagine; by host" evidence="1">
    <location>
        <position position="215"/>
    </location>
</feature>
<feature type="disulfide bond" evidence="1">
    <location>
        <begin position="72"/>
        <end position="397"/>
    </location>
</feature>
<feature type="disulfide bond" evidence="1">
    <location>
        <begin position="104"/>
        <end position="109"/>
    </location>
</feature>
<feature type="disulfide bond" evidence="1">
    <location>
        <begin position="164"/>
        <end position="211"/>
    </location>
</feature>
<feature type="disulfide bond" evidence="1">
    <location>
        <begin position="213"/>
        <end position="218"/>
    </location>
</feature>
<feature type="disulfide bond" evidence="1">
    <location>
        <begin position="259"/>
        <end position="272"/>
    </location>
</feature>
<feature type="disulfide bond" evidence="1">
    <location>
        <begin position="261"/>
        <end position="270"/>
    </location>
</feature>
<feature type="disulfide bond" evidence="1">
    <location>
        <begin position="298"/>
        <end position="315"/>
    </location>
</feature>
<feature type="disulfide bond" evidence="1">
    <location>
        <begin position="401"/>
        <end position="426"/>
    </location>
</feature>
<comment type="function">
    <text evidence="1">Catalyzes the removal of terminal sialic acid residues from viral and cellular glycoconjugates. Cleaves off the terminal sialic acids on the glycosylated HA during virus budding to facilitate virus release. Additionally helps virus spread through the circulation by further removing sialic acids from the cell surface. These cleavages prevent self-aggregation and ensure the efficient spread of the progeny virus from cell to cell. Otherwise, infection would be limited to one round of replication. Described as a receptor-destroying enzyme because it cleaves a terminal sialic acid from the cellular receptors. May facilitate viral invasion of the upper airways by cleaving the sialic acid moieties on the mucin of the airway epithelial cells. Likely to plays a role in the budding process through its association with lipid rafts during intracellular transport. May additionally display a raft-association independent effect on budding. Plays a role in the determination of host range restriction on replication and virulence. Sialidase activity in late endosome/lysosome traffic seems to enhance virus replication.</text>
</comment>
<comment type="catalytic activity">
    <reaction evidence="1">
        <text>Hydrolysis of alpha-(2-&gt;3)-, alpha-(2-&gt;6)-, alpha-(2-&gt;8)- glycosidic linkages of terminal sialic acid residues in oligosaccharides, glycoproteins, glycolipids, colominic acid and synthetic substrates.</text>
        <dbReference type="EC" id="3.2.1.18"/>
    </reaction>
</comment>
<comment type="cofactor">
    <cofactor evidence="1">
        <name>Ca(2+)</name>
        <dbReference type="ChEBI" id="CHEBI:29108"/>
    </cofactor>
</comment>
<comment type="activity regulation">
    <text evidence="1">Inhibited by the neuraminidase inhibitors zanamivir (Relenza) and oseltamivir (Tamiflu). These drugs interfere with the release of progeny virus from infected cells and are effective against all influenza strains. Resistance to neuraminidase inhibitors is quite rare.</text>
</comment>
<comment type="subunit">
    <text evidence="1">Homotetramer.</text>
</comment>
<comment type="subcellular location">
    <subcellularLocation>
        <location evidence="1">Virion membrane</location>
    </subcellularLocation>
    <subcellularLocation>
        <location evidence="1">Host apical cell membrane</location>
        <topology evidence="1">Single-pass type II membrane protein</topology>
    </subcellularLocation>
    <text evidence="1">Preferentially accumulates at the apical plasma membrane in infected polarized epithelial cells, which is the virus assembly site. Uses lipid rafts for cell surface transport and apical sorting. In the virion, forms a mushroom-shaped spike on the surface of the membrane.</text>
</comment>
<comment type="domain">
    <text evidence="1">Intact N-terminus is essential for virion morphogenesis. Possesses two apical sorting signals, one in the ectodomain, which is likely to be a glycan, and the other in the transmembrane domain. The transmembrane domain also plays a role in lipid raft association.</text>
</comment>
<comment type="PTM">
    <text evidence="1">N-glycosylated.</text>
</comment>
<comment type="miscellaneous">
    <text>The influenza A genome consist of 8 RNA segments. Genetic variation of hemagglutinin and/or neuraminidase genes results in the emergence of new influenza strains. The mechanism of variation can be the result of point mutations or the result of genetic reassortment between segments of two different strains.</text>
</comment>
<comment type="similarity">
    <text evidence="1">Belongs to the glycosyl hydrolase 34 family.</text>
</comment>
<keyword id="KW-0106">Calcium</keyword>
<keyword id="KW-1015">Disulfide bond</keyword>
<keyword id="KW-0325">Glycoprotein</keyword>
<keyword id="KW-0326">Glycosidase</keyword>
<keyword id="KW-1032">Host cell membrane</keyword>
<keyword id="KW-1043">Host membrane</keyword>
<keyword id="KW-0378">Hydrolase</keyword>
<keyword id="KW-0472">Membrane</keyword>
<keyword id="KW-0479">Metal-binding</keyword>
<keyword id="KW-0735">Signal-anchor</keyword>
<keyword id="KW-0812">Transmembrane</keyword>
<keyword id="KW-1133">Transmembrane helix</keyword>
<keyword id="KW-0946">Virion</keyword>
<name>NRAM_I02A4</name>
<sequence length="449" mass="49004">MNPNQKIITIGSICMVIGIVSLMLQIGNIISIWVSHSIQTGNQHQAEPISNTNFLTEKAVASVTLAGNSSLCPISGWAVHSKDNSIRIGSKGDVFVIREPFISCSHLECRTFFLTQGALLNDKHSNGTVKDRSPHRTLMSCPVGEAPSPYNSRFESVAWSASACHDGTSWLTIGISGPDNGAVAVLKYNGIITDTIKSWRNNILRTQESECACVNGSCFTVMTDGPSNGQASYKIFKMEKGKVVKSVELDAPNYHYEECSCYPDAGEITCVCRDNWHGSNRPWVSFNQNLEYQIGYICSGVFGDNPRPNDGTGSCGPVSPNGAYGVKGFSFKYGNGVWIGRTKSTNSRSGFEMIWDPNGWTGTDSSFSVKQDIVAITDWSGYSGSFVQHPELTGLDCIRPCFWVELIRGRPKERTIWTSGSSISFCGVNSDTVGWSWPDGAELPFTIDK</sequence>
<gene>
    <name evidence="1" type="primary">NA</name>
</gene>
<proteinExistence type="inferred from homology"/>
<organism>
    <name type="scientific">Influenza A virus (strain A/Silky Chicken/Hong Kong/YU100/2002 H5N1 genotype X3)</name>
    <dbReference type="NCBI Taxonomy" id="284214"/>
    <lineage>
        <taxon>Viruses</taxon>
        <taxon>Riboviria</taxon>
        <taxon>Orthornavirae</taxon>
        <taxon>Negarnaviricota</taxon>
        <taxon>Polyploviricotina</taxon>
        <taxon>Insthoviricetes</taxon>
        <taxon>Articulavirales</taxon>
        <taxon>Orthomyxoviridae</taxon>
        <taxon>Alphainfluenzavirus</taxon>
        <taxon>Alphainfluenzavirus influenzae</taxon>
        <taxon>Influenza A virus</taxon>
    </lineage>
</organism>